<evidence type="ECO:0000255" key="1">
    <source>
        <dbReference type="HAMAP-Rule" id="MF_00133"/>
    </source>
</evidence>
<protein>
    <recommendedName>
        <fullName evidence="1">Tryptophan synthase beta chain</fullName>
        <ecNumber evidence="1">4.2.1.20</ecNumber>
    </recommendedName>
</protein>
<sequence length="397" mass="43680">MGKENQQGYFGEFGGRYSPEILHDALVELETTYKKLKKNKHFKKELEYYRKNYIGRPSPLTYAERLSKVWGGAKIWLKREDLNHTGAHKINNTIGQVLIAKAMGKTRIIAETGAGQHGVATATVGAMFQMETVVYMGEEDLRRQELNAIRMRMLGAKVVGVSSGTATLKDATSEAMRDWALNVSNTHYIVGSSIGPHPFPTIVRDFQSVIGIESRKQFKKVNDKLPNAVIACVGGGSNAIGMFYGFIQDKKVKLFGVEAGGYSSDPGSHSATIQFGRTGFLHGTKTLVIQDDFGQIVPAHSVSAGLDYPGVGPEHAYFHKSGRVEYVNVDDEGALDAFIEVCRIEGIIPALETAHAFRYAKDLARTMSKKENILICLSGRGDKDVAEVSRLRKGEFI</sequence>
<accession>Q72U05</accession>
<keyword id="KW-0028">Amino-acid biosynthesis</keyword>
<keyword id="KW-0057">Aromatic amino acid biosynthesis</keyword>
<keyword id="KW-0456">Lyase</keyword>
<keyword id="KW-0663">Pyridoxal phosphate</keyword>
<keyword id="KW-0822">Tryptophan biosynthesis</keyword>
<name>TRPB_LEPIC</name>
<organism>
    <name type="scientific">Leptospira interrogans serogroup Icterohaemorrhagiae serovar copenhageni (strain Fiocruz L1-130)</name>
    <dbReference type="NCBI Taxonomy" id="267671"/>
    <lineage>
        <taxon>Bacteria</taxon>
        <taxon>Pseudomonadati</taxon>
        <taxon>Spirochaetota</taxon>
        <taxon>Spirochaetia</taxon>
        <taxon>Leptospirales</taxon>
        <taxon>Leptospiraceae</taxon>
        <taxon>Leptospira</taxon>
    </lineage>
</organism>
<feature type="chain" id="PRO_0000098962" description="Tryptophan synthase beta chain">
    <location>
        <begin position="1"/>
        <end position="397"/>
    </location>
</feature>
<feature type="modified residue" description="N6-(pyridoxal phosphate)lysine" evidence="1">
    <location>
        <position position="89"/>
    </location>
</feature>
<dbReference type="EC" id="4.2.1.20" evidence="1"/>
<dbReference type="EMBL" id="AE016823">
    <property type="protein sequence ID" value="AAS69473.1"/>
    <property type="molecule type" value="Genomic_DNA"/>
</dbReference>
<dbReference type="RefSeq" id="WP_000514163.1">
    <property type="nucleotide sequence ID" value="NC_005823.1"/>
</dbReference>
<dbReference type="SMR" id="Q72U05"/>
<dbReference type="GeneID" id="61144191"/>
<dbReference type="KEGG" id="lic:LIC_10859"/>
<dbReference type="HOGENOM" id="CLU_016734_3_1_12"/>
<dbReference type="UniPathway" id="UPA00035">
    <property type="reaction ID" value="UER00044"/>
</dbReference>
<dbReference type="Proteomes" id="UP000007037">
    <property type="component" value="Chromosome I"/>
</dbReference>
<dbReference type="GO" id="GO:0005737">
    <property type="term" value="C:cytoplasm"/>
    <property type="evidence" value="ECO:0007669"/>
    <property type="project" value="TreeGrafter"/>
</dbReference>
<dbReference type="GO" id="GO:0004834">
    <property type="term" value="F:tryptophan synthase activity"/>
    <property type="evidence" value="ECO:0007669"/>
    <property type="project" value="UniProtKB-UniRule"/>
</dbReference>
<dbReference type="CDD" id="cd06446">
    <property type="entry name" value="Trp-synth_B"/>
    <property type="match status" value="1"/>
</dbReference>
<dbReference type="FunFam" id="3.40.50.1100:FF:000001">
    <property type="entry name" value="Tryptophan synthase beta chain"/>
    <property type="match status" value="1"/>
</dbReference>
<dbReference type="FunFam" id="3.40.50.1100:FF:000004">
    <property type="entry name" value="Tryptophan synthase beta chain"/>
    <property type="match status" value="1"/>
</dbReference>
<dbReference type="Gene3D" id="3.40.50.1100">
    <property type="match status" value="2"/>
</dbReference>
<dbReference type="HAMAP" id="MF_00133">
    <property type="entry name" value="Trp_synth_beta"/>
    <property type="match status" value="1"/>
</dbReference>
<dbReference type="InterPro" id="IPR006653">
    <property type="entry name" value="Trp_synth_b_CS"/>
</dbReference>
<dbReference type="InterPro" id="IPR006654">
    <property type="entry name" value="Trp_synth_beta"/>
</dbReference>
<dbReference type="InterPro" id="IPR023026">
    <property type="entry name" value="Trp_synth_beta/beta-like"/>
</dbReference>
<dbReference type="InterPro" id="IPR001926">
    <property type="entry name" value="TrpB-like_PALP"/>
</dbReference>
<dbReference type="InterPro" id="IPR036052">
    <property type="entry name" value="TrpB-like_PALP_sf"/>
</dbReference>
<dbReference type="NCBIfam" id="TIGR00263">
    <property type="entry name" value="trpB"/>
    <property type="match status" value="1"/>
</dbReference>
<dbReference type="PANTHER" id="PTHR48077:SF3">
    <property type="entry name" value="TRYPTOPHAN SYNTHASE"/>
    <property type="match status" value="1"/>
</dbReference>
<dbReference type="PANTHER" id="PTHR48077">
    <property type="entry name" value="TRYPTOPHAN SYNTHASE-RELATED"/>
    <property type="match status" value="1"/>
</dbReference>
<dbReference type="Pfam" id="PF00291">
    <property type="entry name" value="PALP"/>
    <property type="match status" value="1"/>
</dbReference>
<dbReference type="PIRSF" id="PIRSF001413">
    <property type="entry name" value="Trp_syn_beta"/>
    <property type="match status" value="1"/>
</dbReference>
<dbReference type="SUPFAM" id="SSF53686">
    <property type="entry name" value="Tryptophan synthase beta subunit-like PLP-dependent enzymes"/>
    <property type="match status" value="1"/>
</dbReference>
<dbReference type="PROSITE" id="PS00168">
    <property type="entry name" value="TRP_SYNTHASE_BETA"/>
    <property type="match status" value="1"/>
</dbReference>
<reference key="1">
    <citation type="journal article" date="2004" name="J. Bacteriol.">
        <title>Comparative genomics of two Leptospira interrogans serovars reveals novel insights into physiology and pathogenesis.</title>
        <authorList>
            <person name="Nascimento A.L.T.O."/>
            <person name="Ko A.I."/>
            <person name="Martins E.A.L."/>
            <person name="Monteiro-Vitorello C.B."/>
            <person name="Ho P.L."/>
            <person name="Haake D.A."/>
            <person name="Verjovski-Almeida S."/>
            <person name="Hartskeerl R.A."/>
            <person name="Marques M.V."/>
            <person name="Oliveira M.C."/>
            <person name="Menck C.F.M."/>
            <person name="Leite L.C.C."/>
            <person name="Carrer H."/>
            <person name="Coutinho L.L."/>
            <person name="Degrave W.M."/>
            <person name="Dellagostin O.A."/>
            <person name="El-Dorry H."/>
            <person name="Ferro E.S."/>
            <person name="Ferro M.I.T."/>
            <person name="Furlan L.R."/>
            <person name="Gamberini M."/>
            <person name="Giglioti E.A."/>
            <person name="Goes-Neto A."/>
            <person name="Goldman G.H."/>
            <person name="Goldman M.H.S."/>
            <person name="Harakava R."/>
            <person name="Jeronimo S.M.B."/>
            <person name="Junqueira-de-Azevedo I.L.M."/>
            <person name="Kimura E.T."/>
            <person name="Kuramae E.E."/>
            <person name="Lemos E.G.M."/>
            <person name="Lemos M.V.F."/>
            <person name="Marino C.L."/>
            <person name="Nunes L.R."/>
            <person name="de Oliveira R.C."/>
            <person name="Pereira G.G."/>
            <person name="Reis M.S."/>
            <person name="Schriefer A."/>
            <person name="Siqueira W.J."/>
            <person name="Sommer P."/>
            <person name="Tsai S.M."/>
            <person name="Simpson A.J.G."/>
            <person name="Ferro J.A."/>
            <person name="Camargo L.E.A."/>
            <person name="Kitajima J.P."/>
            <person name="Setubal J.C."/>
            <person name="Van Sluys M.A."/>
        </authorList>
    </citation>
    <scope>NUCLEOTIDE SEQUENCE [LARGE SCALE GENOMIC DNA]</scope>
    <source>
        <strain>Fiocruz L1-130</strain>
    </source>
</reference>
<comment type="function">
    <text evidence="1">The beta subunit is responsible for the synthesis of L-tryptophan from indole and L-serine.</text>
</comment>
<comment type="catalytic activity">
    <reaction evidence="1">
        <text>(1S,2R)-1-C-(indol-3-yl)glycerol 3-phosphate + L-serine = D-glyceraldehyde 3-phosphate + L-tryptophan + H2O</text>
        <dbReference type="Rhea" id="RHEA:10532"/>
        <dbReference type="ChEBI" id="CHEBI:15377"/>
        <dbReference type="ChEBI" id="CHEBI:33384"/>
        <dbReference type="ChEBI" id="CHEBI:57912"/>
        <dbReference type="ChEBI" id="CHEBI:58866"/>
        <dbReference type="ChEBI" id="CHEBI:59776"/>
        <dbReference type="EC" id="4.2.1.20"/>
    </reaction>
</comment>
<comment type="cofactor">
    <cofactor evidence="1">
        <name>pyridoxal 5'-phosphate</name>
        <dbReference type="ChEBI" id="CHEBI:597326"/>
    </cofactor>
</comment>
<comment type="pathway">
    <text evidence="1">Amino-acid biosynthesis; L-tryptophan biosynthesis; L-tryptophan from chorismate: step 5/5.</text>
</comment>
<comment type="subunit">
    <text evidence="1">Tetramer of two alpha and two beta chains.</text>
</comment>
<comment type="similarity">
    <text evidence="1">Belongs to the TrpB family.</text>
</comment>
<gene>
    <name evidence="1" type="primary">trpB</name>
    <name type="synonym">trpB1</name>
    <name type="ordered locus">LIC_10859</name>
</gene>
<proteinExistence type="inferred from homology"/>